<evidence type="ECO:0000255" key="1">
    <source>
        <dbReference type="HAMAP-Rule" id="MF_00445"/>
    </source>
</evidence>
<protein>
    <recommendedName>
        <fullName evidence="1">NADH-quinone oxidoreductase subunit N</fullName>
        <ecNumber evidence="1">7.1.1.-</ecNumber>
    </recommendedName>
    <alternativeName>
        <fullName evidence="1">NADH dehydrogenase I subunit N</fullName>
    </alternativeName>
    <alternativeName>
        <fullName evidence="1">NDH-1 subunit N</fullName>
    </alternativeName>
</protein>
<feature type="chain" id="PRO_0000391130" description="NADH-quinone oxidoreductase subunit N">
    <location>
        <begin position="1"/>
        <end position="482"/>
    </location>
</feature>
<feature type="transmembrane region" description="Helical" evidence="1">
    <location>
        <begin position="11"/>
        <end position="31"/>
    </location>
</feature>
<feature type="transmembrane region" description="Helical" evidence="1">
    <location>
        <begin position="37"/>
        <end position="57"/>
    </location>
</feature>
<feature type="transmembrane region" description="Helical" evidence="1">
    <location>
        <begin position="77"/>
        <end position="97"/>
    </location>
</feature>
<feature type="transmembrane region" description="Helical" evidence="1">
    <location>
        <begin position="106"/>
        <end position="126"/>
    </location>
</feature>
<feature type="transmembrane region" description="Helical" evidence="1">
    <location>
        <begin position="131"/>
        <end position="151"/>
    </location>
</feature>
<feature type="transmembrane region" description="Helical" evidence="1">
    <location>
        <begin position="166"/>
        <end position="186"/>
    </location>
</feature>
<feature type="transmembrane region" description="Helical" evidence="1">
    <location>
        <begin position="208"/>
        <end position="228"/>
    </location>
</feature>
<feature type="transmembrane region" description="Helical" evidence="1">
    <location>
        <begin position="255"/>
        <end position="275"/>
    </location>
</feature>
<feature type="transmembrane region" description="Helical" evidence="1">
    <location>
        <begin position="279"/>
        <end position="299"/>
    </location>
</feature>
<feature type="transmembrane region" description="Helical" evidence="1">
    <location>
        <begin position="304"/>
        <end position="324"/>
    </location>
</feature>
<feature type="transmembrane region" description="Helical" evidence="1">
    <location>
        <begin position="332"/>
        <end position="352"/>
    </location>
</feature>
<feature type="transmembrane region" description="Helical" evidence="1">
    <location>
        <begin position="376"/>
        <end position="396"/>
    </location>
</feature>
<feature type="transmembrane region" description="Helical" evidence="1">
    <location>
        <begin position="404"/>
        <end position="424"/>
    </location>
</feature>
<feature type="transmembrane region" description="Helical" evidence="1">
    <location>
        <begin position="462"/>
        <end position="482"/>
    </location>
</feature>
<name>NUON_COXBU</name>
<accession>Q83BR8</accession>
<proteinExistence type="inferred from homology"/>
<sequence>MPSELPNFIPAVPEMFVLFMALVILLAGVFIKKRHQIPYYLTQITLILVAGLTWYIFTYSDFAETSFTFHHMFVLDRFSVYLKLFIYLSVFFAFIYAREYNDERKIPHTEFYVLGLLSMLGMVALVSSSNLLTVFLGLELLSLPTYAMVALYRNKTRSVEAGMKYFVIGAIASGMLLYGMSMIFGATQSLDLTEIAKAVSATPLHQNLILVFGLVFIVAGVAFKLGTAPFHMWVPDVYEGAPSSVTLFISTAPKIAAYAMIIRLLILGMPALHVQWHQMLIVVAILSMGIGNFAAIVQSNIKRMLAYSSIAHMGYMLLGVLCGTRNGYAAAMFYTITYSLMSLGAFGMVVLMSRGGFEAENINDFAGLNSRNPWLAFMMMLILFSLAGVPPLVGFIAKVGVLDALIQVHLVWLAVLAVLFAIVGAYYYIRVVKVMYFESAPPQLKPIRCSLEMKIAISLNGLAVLFIGIFPGWLYALSHLAF</sequence>
<reference key="1">
    <citation type="journal article" date="2003" name="Proc. Natl. Acad. Sci. U.S.A.">
        <title>Complete genome sequence of the Q-fever pathogen, Coxiella burnetii.</title>
        <authorList>
            <person name="Seshadri R."/>
            <person name="Paulsen I.T."/>
            <person name="Eisen J.A."/>
            <person name="Read T.D."/>
            <person name="Nelson K.E."/>
            <person name="Nelson W.C."/>
            <person name="Ward N.L."/>
            <person name="Tettelin H."/>
            <person name="Davidsen T.M."/>
            <person name="Beanan M.J."/>
            <person name="DeBoy R.T."/>
            <person name="Daugherty S.C."/>
            <person name="Brinkac L.M."/>
            <person name="Madupu R."/>
            <person name="Dodson R.J."/>
            <person name="Khouri H.M."/>
            <person name="Lee K.H."/>
            <person name="Carty H.A."/>
            <person name="Scanlan D."/>
            <person name="Heinzen R.A."/>
            <person name="Thompson H.A."/>
            <person name="Samuel J.E."/>
            <person name="Fraser C.M."/>
            <person name="Heidelberg J.F."/>
        </authorList>
    </citation>
    <scope>NUCLEOTIDE SEQUENCE [LARGE SCALE GENOMIC DNA]</scope>
    <source>
        <strain>RSA 493 / Nine Mile phase I</strain>
    </source>
</reference>
<comment type="function">
    <text evidence="1">NDH-1 shuttles electrons from NADH, via FMN and iron-sulfur (Fe-S) centers, to quinones in the respiratory chain. The immediate electron acceptor for the enzyme in this species is believed to be ubiquinone. Couples the redox reaction to proton translocation (for every two electrons transferred, four hydrogen ions are translocated across the cytoplasmic membrane), and thus conserves the redox energy in a proton gradient.</text>
</comment>
<comment type="catalytic activity">
    <reaction evidence="1">
        <text>a quinone + NADH + 5 H(+)(in) = a quinol + NAD(+) + 4 H(+)(out)</text>
        <dbReference type="Rhea" id="RHEA:57888"/>
        <dbReference type="ChEBI" id="CHEBI:15378"/>
        <dbReference type="ChEBI" id="CHEBI:24646"/>
        <dbReference type="ChEBI" id="CHEBI:57540"/>
        <dbReference type="ChEBI" id="CHEBI:57945"/>
        <dbReference type="ChEBI" id="CHEBI:132124"/>
    </reaction>
</comment>
<comment type="subunit">
    <text evidence="1">NDH-1 is composed of 14 different subunits. Subunits NuoA, H, J, K, L, M, N constitute the membrane sector of the complex.</text>
</comment>
<comment type="subcellular location">
    <subcellularLocation>
        <location evidence="1">Cell inner membrane</location>
        <topology evidence="1">Multi-pass membrane protein</topology>
    </subcellularLocation>
</comment>
<comment type="similarity">
    <text evidence="1">Belongs to the complex I subunit 2 family.</text>
</comment>
<gene>
    <name evidence="1" type="primary">nuoN</name>
    <name type="ordered locus">CBU_1435</name>
</gene>
<organism>
    <name type="scientific">Coxiella burnetii (strain RSA 493 / Nine Mile phase I)</name>
    <dbReference type="NCBI Taxonomy" id="227377"/>
    <lineage>
        <taxon>Bacteria</taxon>
        <taxon>Pseudomonadati</taxon>
        <taxon>Pseudomonadota</taxon>
        <taxon>Gammaproteobacteria</taxon>
        <taxon>Legionellales</taxon>
        <taxon>Coxiellaceae</taxon>
        <taxon>Coxiella</taxon>
    </lineage>
</organism>
<dbReference type="EC" id="7.1.1.-" evidence="1"/>
<dbReference type="EMBL" id="AE016828">
    <property type="protein sequence ID" value="AAO90932.1"/>
    <property type="molecule type" value="Genomic_DNA"/>
</dbReference>
<dbReference type="RefSeq" id="NP_820418.1">
    <property type="nucleotide sequence ID" value="NC_002971.4"/>
</dbReference>
<dbReference type="RefSeq" id="WP_010958226.1">
    <property type="nucleotide sequence ID" value="NC_002971.4"/>
</dbReference>
<dbReference type="SMR" id="Q83BR8"/>
<dbReference type="STRING" id="227377.CBU_1435"/>
<dbReference type="EnsemblBacteria" id="AAO90932">
    <property type="protein sequence ID" value="AAO90932"/>
    <property type="gene ID" value="CBU_1435"/>
</dbReference>
<dbReference type="GeneID" id="1209342"/>
<dbReference type="KEGG" id="cbu:CBU_1435"/>
<dbReference type="PATRIC" id="fig|227377.7.peg.1434"/>
<dbReference type="eggNOG" id="COG1007">
    <property type="taxonomic scope" value="Bacteria"/>
</dbReference>
<dbReference type="HOGENOM" id="CLU_007100_1_3_6"/>
<dbReference type="OrthoDB" id="9768329at2"/>
<dbReference type="Proteomes" id="UP000002671">
    <property type="component" value="Chromosome"/>
</dbReference>
<dbReference type="GO" id="GO:0005886">
    <property type="term" value="C:plasma membrane"/>
    <property type="evidence" value="ECO:0007669"/>
    <property type="project" value="UniProtKB-SubCell"/>
</dbReference>
<dbReference type="GO" id="GO:0008137">
    <property type="term" value="F:NADH dehydrogenase (ubiquinone) activity"/>
    <property type="evidence" value="ECO:0007669"/>
    <property type="project" value="InterPro"/>
</dbReference>
<dbReference type="GO" id="GO:0050136">
    <property type="term" value="F:NADH:ubiquinone reductase (non-electrogenic) activity"/>
    <property type="evidence" value="ECO:0007669"/>
    <property type="project" value="UniProtKB-UniRule"/>
</dbReference>
<dbReference type="GO" id="GO:0048038">
    <property type="term" value="F:quinone binding"/>
    <property type="evidence" value="ECO:0007669"/>
    <property type="project" value="UniProtKB-KW"/>
</dbReference>
<dbReference type="GO" id="GO:0042773">
    <property type="term" value="P:ATP synthesis coupled electron transport"/>
    <property type="evidence" value="ECO:0007669"/>
    <property type="project" value="InterPro"/>
</dbReference>
<dbReference type="HAMAP" id="MF_00445">
    <property type="entry name" value="NDH1_NuoN_1"/>
    <property type="match status" value="1"/>
</dbReference>
<dbReference type="InterPro" id="IPR010096">
    <property type="entry name" value="NADH-Q_OxRdtase_suN/2"/>
</dbReference>
<dbReference type="InterPro" id="IPR001750">
    <property type="entry name" value="ND/Mrp_TM"/>
</dbReference>
<dbReference type="NCBIfam" id="TIGR01770">
    <property type="entry name" value="NDH_I_N"/>
    <property type="match status" value="1"/>
</dbReference>
<dbReference type="NCBIfam" id="NF004442">
    <property type="entry name" value="PRK05777.1-5"/>
    <property type="match status" value="1"/>
</dbReference>
<dbReference type="PANTHER" id="PTHR22773">
    <property type="entry name" value="NADH DEHYDROGENASE"/>
    <property type="match status" value="1"/>
</dbReference>
<dbReference type="Pfam" id="PF00361">
    <property type="entry name" value="Proton_antipo_M"/>
    <property type="match status" value="1"/>
</dbReference>
<dbReference type="PRINTS" id="PR01434">
    <property type="entry name" value="NADHDHGNASE5"/>
</dbReference>
<keyword id="KW-0997">Cell inner membrane</keyword>
<keyword id="KW-1003">Cell membrane</keyword>
<keyword id="KW-0472">Membrane</keyword>
<keyword id="KW-0520">NAD</keyword>
<keyword id="KW-0874">Quinone</keyword>
<keyword id="KW-1185">Reference proteome</keyword>
<keyword id="KW-1278">Translocase</keyword>
<keyword id="KW-0812">Transmembrane</keyword>
<keyword id="KW-1133">Transmembrane helix</keyword>
<keyword id="KW-0813">Transport</keyword>
<keyword id="KW-0830">Ubiquinone</keyword>